<proteinExistence type="inferred from homology"/>
<name>FPRA_MYCLE</name>
<accession>O32886</accession>
<gene>
    <name type="primary">fprA</name>
    <name type="ordered locus">ML0666</name>
    <name type="ORF">MLCB1779.25</name>
</gene>
<keyword id="KW-0274">FAD</keyword>
<keyword id="KW-0285">Flavoprotein</keyword>
<keyword id="KW-0521">NADP</keyword>
<keyword id="KW-0560">Oxidoreductase</keyword>
<keyword id="KW-1185">Reference proteome</keyword>
<comment type="function">
    <text evidence="1">May serve as electron transfer protein and supply electrons to P450 systems.</text>
</comment>
<comment type="catalytic activity">
    <reaction>
        <text>2 reduced [2Fe-2S]-[ferredoxin] + NADP(+) + H(+) = 2 oxidized [2Fe-2S]-[ferredoxin] + NADPH</text>
        <dbReference type="Rhea" id="RHEA:20125"/>
        <dbReference type="Rhea" id="RHEA-COMP:10000"/>
        <dbReference type="Rhea" id="RHEA-COMP:10001"/>
        <dbReference type="ChEBI" id="CHEBI:15378"/>
        <dbReference type="ChEBI" id="CHEBI:33737"/>
        <dbReference type="ChEBI" id="CHEBI:33738"/>
        <dbReference type="ChEBI" id="CHEBI:57783"/>
        <dbReference type="ChEBI" id="CHEBI:58349"/>
        <dbReference type="EC" id="1.18.1.2"/>
    </reaction>
</comment>
<comment type="cofactor">
    <cofactor evidence="1">
        <name>FAD</name>
        <dbReference type="ChEBI" id="CHEBI:57692"/>
    </cofactor>
</comment>
<comment type="subunit">
    <text evidence="1">Monomer.</text>
</comment>
<comment type="similarity">
    <text evidence="2">Belongs to the ferredoxin--NADP reductase type 1 family.</text>
</comment>
<organism>
    <name type="scientific">Mycobacterium leprae (strain TN)</name>
    <dbReference type="NCBI Taxonomy" id="272631"/>
    <lineage>
        <taxon>Bacteria</taxon>
        <taxon>Bacillati</taxon>
        <taxon>Actinomycetota</taxon>
        <taxon>Actinomycetes</taxon>
        <taxon>Mycobacteriales</taxon>
        <taxon>Mycobacteriaceae</taxon>
        <taxon>Mycobacterium</taxon>
    </lineage>
</organism>
<sequence length="456" mass="49630">MRPHHIHHIAIVGSGPSGFFAAASVLKAADASDEINVAVDMLEMLPTPWGLVRSGVAPDHPKIKSISKQFEKTAEDPRFRFFGNVIVGKHIEPAELAERYDAVIYAVGAQSDRALNIPGEDLPGSIAAVDFVGWYNAHPNFHERSPDLSGSRAVVIGNGNVALDVTRILITDPDVLAFTDIADHALESLRPRGIEEVVIVGRRGPLQTAFTTLELRELADIEGVDVLVDPAQLEGISDENAAAAGKTTRQNIKVLRDYTVRTPKPGHRRIVFRFLTSPIEIKGKGKVERIVLGQNELVTDDNGRVAAKDTGVREELPAQLIVRSIGYRGVPTPGLPFDDSSVTIPNTNGRVNGSRNEYVVGWIKRGPTGVIGTNKKDSQDTVDTLMENLAGANDTEKFGADHADRLAEWLAERQPKLVTSAHWQAIDRFERAAGEPHGRPRVKLPNLAELLRIGHG</sequence>
<dbReference type="EC" id="1.18.1.2"/>
<dbReference type="EMBL" id="Z98271">
    <property type="protein sequence ID" value="CAB11006.1"/>
    <property type="molecule type" value="Genomic_DNA"/>
</dbReference>
<dbReference type="EMBL" id="AL583919">
    <property type="protein sequence ID" value="CAC30175.1"/>
    <property type="molecule type" value="Genomic_DNA"/>
</dbReference>
<dbReference type="PIR" id="T45314">
    <property type="entry name" value="T45314"/>
</dbReference>
<dbReference type="RefSeq" id="NP_301540.1">
    <property type="nucleotide sequence ID" value="NC_002677.1"/>
</dbReference>
<dbReference type="RefSeq" id="WP_010907864.1">
    <property type="nucleotide sequence ID" value="NC_002677.1"/>
</dbReference>
<dbReference type="SMR" id="O32886"/>
<dbReference type="STRING" id="272631.gene:17574489"/>
<dbReference type="KEGG" id="mle:ML0666"/>
<dbReference type="PATRIC" id="fig|272631.5.peg.1186"/>
<dbReference type="Leproma" id="ML0666"/>
<dbReference type="eggNOG" id="COG0493">
    <property type="taxonomic scope" value="Bacteria"/>
</dbReference>
<dbReference type="HOGENOM" id="CLU_024722_3_0_11"/>
<dbReference type="OrthoDB" id="289202at2"/>
<dbReference type="Proteomes" id="UP000000806">
    <property type="component" value="Chromosome"/>
</dbReference>
<dbReference type="GO" id="GO:0004324">
    <property type="term" value="F:ferredoxin-NADP+ reductase activity"/>
    <property type="evidence" value="ECO:0007669"/>
    <property type="project" value="UniProtKB-EC"/>
</dbReference>
<dbReference type="Gene3D" id="3.50.50.60">
    <property type="entry name" value="FAD/NAD(P)-binding domain"/>
    <property type="match status" value="1"/>
</dbReference>
<dbReference type="Gene3D" id="3.40.50.720">
    <property type="entry name" value="NAD(P)-binding Rossmann-like Domain"/>
    <property type="match status" value="1"/>
</dbReference>
<dbReference type="InterPro" id="IPR036188">
    <property type="entry name" value="FAD/NAD-bd_sf"/>
</dbReference>
<dbReference type="InterPro" id="IPR023753">
    <property type="entry name" value="FAD/NAD-binding_dom"/>
</dbReference>
<dbReference type="InterPro" id="IPR055275">
    <property type="entry name" value="Ferredox_Rdtase"/>
</dbReference>
<dbReference type="InterPro" id="IPR021163">
    <property type="entry name" value="Ferredox_Rdtase_adrenod"/>
</dbReference>
<dbReference type="PANTHER" id="PTHR48467">
    <property type="entry name" value="GLUTAMATE SYNTHASE 1 [NADH], CHLOROPLASTIC-LIKE"/>
    <property type="match status" value="1"/>
</dbReference>
<dbReference type="PANTHER" id="PTHR48467:SF1">
    <property type="entry name" value="GLUTAMATE SYNTHASE 1 [NADH], CHLOROPLASTIC-LIKE"/>
    <property type="match status" value="1"/>
</dbReference>
<dbReference type="Pfam" id="PF07992">
    <property type="entry name" value="Pyr_redox_2"/>
    <property type="match status" value="1"/>
</dbReference>
<dbReference type="PIRSF" id="PIRSF000362">
    <property type="entry name" value="FNR"/>
    <property type="match status" value="1"/>
</dbReference>
<dbReference type="PRINTS" id="PR00419">
    <property type="entry name" value="ADXRDTASE"/>
</dbReference>
<dbReference type="SUPFAM" id="SSF51971">
    <property type="entry name" value="Nucleotide-binding domain"/>
    <property type="match status" value="2"/>
</dbReference>
<reference key="1">
    <citation type="journal article" date="2001" name="Nature">
        <title>Massive gene decay in the leprosy bacillus.</title>
        <authorList>
            <person name="Cole S.T."/>
            <person name="Eiglmeier K."/>
            <person name="Parkhill J."/>
            <person name="James K.D."/>
            <person name="Thomson N.R."/>
            <person name="Wheeler P.R."/>
            <person name="Honore N."/>
            <person name="Garnier T."/>
            <person name="Churcher C.M."/>
            <person name="Harris D.E."/>
            <person name="Mungall K.L."/>
            <person name="Basham D."/>
            <person name="Brown D."/>
            <person name="Chillingworth T."/>
            <person name="Connor R."/>
            <person name="Davies R.M."/>
            <person name="Devlin K."/>
            <person name="Duthoy S."/>
            <person name="Feltwell T."/>
            <person name="Fraser A."/>
            <person name="Hamlin N."/>
            <person name="Holroyd S."/>
            <person name="Hornsby T."/>
            <person name="Jagels K."/>
            <person name="Lacroix C."/>
            <person name="Maclean J."/>
            <person name="Moule S."/>
            <person name="Murphy L.D."/>
            <person name="Oliver K."/>
            <person name="Quail M.A."/>
            <person name="Rajandream M.A."/>
            <person name="Rutherford K.M."/>
            <person name="Rutter S."/>
            <person name="Seeger K."/>
            <person name="Simon S."/>
            <person name="Simmonds M."/>
            <person name="Skelton J."/>
            <person name="Squares R."/>
            <person name="Squares S."/>
            <person name="Stevens K."/>
            <person name="Taylor K."/>
            <person name="Whitehead S."/>
            <person name="Woodward J.R."/>
            <person name="Barrell B.G."/>
        </authorList>
    </citation>
    <scope>NUCLEOTIDE SEQUENCE [LARGE SCALE GENOMIC DNA]</scope>
    <source>
        <strain>TN</strain>
    </source>
</reference>
<protein>
    <recommendedName>
        <fullName>NADPH-ferredoxin reductase FprA</fullName>
        <shortName>NFR</shortName>
        <ecNumber>1.18.1.2</ecNumber>
    </recommendedName>
</protein>
<feature type="chain" id="PRO_0000087328" description="NADPH-ferredoxin reductase FprA">
    <location>
        <begin position="1"/>
        <end position="456"/>
    </location>
</feature>
<feature type="binding site" evidence="1">
    <location>
        <position position="17"/>
    </location>
    <ligand>
        <name>FAD</name>
        <dbReference type="ChEBI" id="CHEBI:57692"/>
    </ligand>
</feature>
<feature type="binding site" evidence="1">
    <location>
        <position position="43"/>
    </location>
    <ligand>
        <name>FAD</name>
        <dbReference type="ChEBI" id="CHEBI:57692"/>
    </ligand>
</feature>
<feature type="binding site" evidence="1">
    <location>
        <position position="51"/>
    </location>
    <ligand>
        <name>FAD</name>
        <dbReference type="ChEBI" id="CHEBI:57692"/>
    </ligand>
</feature>
<feature type="binding site" evidence="1">
    <location>
        <position position="87"/>
    </location>
    <ligand>
        <name>FAD</name>
        <dbReference type="ChEBI" id="CHEBI:57692"/>
    </ligand>
</feature>
<feature type="binding site" evidence="1">
    <location>
        <position position="113"/>
    </location>
    <ligand>
        <name>NADP(+)</name>
        <dbReference type="ChEBI" id="CHEBI:58349"/>
    </ligand>
</feature>
<feature type="binding site" evidence="1">
    <location>
        <begin position="158"/>
        <end position="161"/>
    </location>
    <ligand>
        <name>NADP(+)</name>
        <dbReference type="ChEBI" id="CHEBI:58349"/>
    </ligand>
</feature>
<feature type="binding site" evidence="1">
    <location>
        <begin position="202"/>
        <end position="203"/>
    </location>
    <ligand>
        <name>NADP(+)</name>
        <dbReference type="ChEBI" id="CHEBI:58349"/>
    </ligand>
</feature>
<feature type="binding site" evidence="1">
    <location>
        <position position="214"/>
    </location>
    <ligand>
        <name>NADP(+)</name>
        <dbReference type="ChEBI" id="CHEBI:58349"/>
    </ligand>
</feature>
<feature type="binding site" evidence="1">
    <location>
        <position position="362"/>
    </location>
    <ligand>
        <name>FAD</name>
        <dbReference type="ChEBI" id="CHEBI:57692"/>
    </ligand>
</feature>
<feature type="binding site" evidence="1">
    <location>
        <begin position="369"/>
        <end position="371"/>
    </location>
    <ligand>
        <name>FAD</name>
        <dbReference type="ChEBI" id="CHEBI:57692"/>
    </ligand>
</feature>
<feature type="binding site" evidence="1">
    <location>
        <position position="369"/>
    </location>
    <ligand>
        <name>NADP(+)</name>
        <dbReference type="ChEBI" id="CHEBI:58349"/>
    </ligand>
</feature>
<evidence type="ECO:0000250" key="1"/>
<evidence type="ECO:0000305" key="2"/>